<reference key="1">
    <citation type="journal article" date="2013" name="Nature">
        <title>The zebrafish reference genome sequence and its relationship to the human genome.</title>
        <authorList>
            <person name="Howe K."/>
            <person name="Clark M.D."/>
            <person name="Torroja C.F."/>
            <person name="Torrance J."/>
            <person name="Berthelot C."/>
            <person name="Muffato M."/>
            <person name="Collins J.E."/>
            <person name="Humphray S."/>
            <person name="McLaren K."/>
            <person name="Matthews L."/>
            <person name="McLaren S."/>
            <person name="Sealy I."/>
            <person name="Caccamo M."/>
            <person name="Churcher C."/>
            <person name="Scott C."/>
            <person name="Barrett J.C."/>
            <person name="Koch R."/>
            <person name="Rauch G.J."/>
            <person name="White S."/>
            <person name="Chow W."/>
            <person name="Kilian B."/>
            <person name="Quintais L.T."/>
            <person name="Guerra-Assuncao J.A."/>
            <person name="Zhou Y."/>
            <person name="Gu Y."/>
            <person name="Yen J."/>
            <person name="Vogel J.H."/>
            <person name="Eyre T."/>
            <person name="Redmond S."/>
            <person name="Banerjee R."/>
            <person name="Chi J."/>
            <person name="Fu B."/>
            <person name="Langley E."/>
            <person name="Maguire S.F."/>
            <person name="Laird G.K."/>
            <person name="Lloyd D."/>
            <person name="Kenyon E."/>
            <person name="Donaldson S."/>
            <person name="Sehra H."/>
            <person name="Almeida-King J."/>
            <person name="Loveland J."/>
            <person name="Trevanion S."/>
            <person name="Jones M."/>
            <person name="Quail M."/>
            <person name="Willey D."/>
            <person name="Hunt A."/>
            <person name="Burton J."/>
            <person name="Sims S."/>
            <person name="McLay K."/>
            <person name="Plumb B."/>
            <person name="Davis J."/>
            <person name="Clee C."/>
            <person name="Oliver K."/>
            <person name="Clark R."/>
            <person name="Riddle C."/>
            <person name="Elliot D."/>
            <person name="Threadgold G."/>
            <person name="Harden G."/>
            <person name="Ware D."/>
            <person name="Begum S."/>
            <person name="Mortimore B."/>
            <person name="Kerry G."/>
            <person name="Heath P."/>
            <person name="Phillimore B."/>
            <person name="Tracey A."/>
            <person name="Corby N."/>
            <person name="Dunn M."/>
            <person name="Johnson C."/>
            <person name="Wood J."/>
            <person name="Clark S."/>
            <person name="Pelan S."/>
            <person name="Griffiths G."/>
            <person name="Smith M."/>
            <person name="Glithero R."/>
            <person name="Howden P."/>
            <person name="Barker N."/>
            <person name="Lloyd C."/>
            <person name="Stevens C."/>
            <person name="Harley J."/>
            <person name="Holt K."/>
            <person name="Panagiotidis G."/>
            <person name="Lovell J."/>
            <person name="Beasley H."/>
            <person name="Henderson C."/>
            <person name="Gordon D."/>
            <person name="Auger K."/>
            <person name="Wright D."/>
            <person name="Collins J."/>
            <person name="Raisen C."/>
            <person name="Dyer L."/>
            <person name="Leung K."/>
            <person name="Robertson L."/>
            <person name="Ambridge K."/>
            <person name="Leongamornlert D."/>
            <person name="McGuire S."/>
            <person name="Gilderthorp R."/>
            <person name="Griffiths C."/>
            <person name="Manthravadi D."/>
            <person name="Nichol S."/>
            <person name="Barker G."/>
            <person name="Whitehead S."/>
            <person name="Kay M."/>
            <person name="Brown J."/>
            <person name="Murnane C."/>
            <person name="Gray E."/>
            <person name="Humphries M."/>
            <person name="Sycamore N."/>
            <person name="Barker D."/>
            <person name="Saunders D."/>
            <person name="Wallis J."/>
            <person name="Babbage A."/>
            <person name="Hammond S."/>
            <person name="Mashreghi-Mohammadi M."/>
            <person name="Barr L."/>
            <person name="Martin S."/>
            <person name="Wray P."/>
            <person name="Ellington A."/>
            <person name="Matthews N."/>
            <person name="Ellwood M."/>
            <person name="Woodmansey R."/>
            <person name="Clark G."/>
            <person name="Cooper J."/>
            <person name="Tromans A."/>
            <person name="Grafham D."/>
            <person name="Skuce C."/>
            <person name="Pandian R."/>
            <person name="Andrews R."/>
            <person name="Harrison E."/>
            <person name="Kimberley A."/>
            <person name="Garnett J."/>
            <person name="Fosker N."/>
            <person name="Hall R."/>
            <person name="Garner P."/>
            <person name="Kelly D."/>
            <person name="Bird C."/>
            <person name="Palmer S."/>
            <person name="Gehring I."/>
            <person name="Berger A."/>
            <person name="Dooley C.M."/>
            <person name="Ersan-Urun Z."/>
            <person name="Eser C."/>
            <person name="Geiger H."/>
            <person name="Geisler M."/>
            <person name="Karotki L."/>
            <person name="Kirn A."/>
            <person name="Konantz J."/>
            <person name="Konantz M."/>
            <person name="Oberlander M."/>
            <person name="Rudolph-Geiger S."/>
            <person name="Teucke M."/>
            <person name="Lanz C."/>
            <person name="Raddatz G."/>
            <person name="Osoegawa K."/>
            <person name="Zhu B."/>
            <person name="Rapp A."/>
            <person name="Widaa S."/>
            <person name="Langford C."/>
            <person name="Yang F."/>
            <person name="Schuster S.C."/>
            <person name="Carter N.P."/>
            <person name="Harrow J."/>
            <person name="Ning Z."/>
            <person name="Herrero J."/>
            <person name="Searle S.M."/>
            <person name="Enright A."/>
            <person name="Geisler R."/>
            <person name="Plasterk R.H."/>
            <person name="Lee C."/>
            <person name="Westerfield M."/>
            <person name="de Jong P.J."/>
            <person name="Zon L.I."/>
            <person name="Postlethwait J.H."/>
            <person name="Nusslein-Volhard C."/>
            <person name="Hubbard T.J."/>
            <person name="Roest Crollius H."/>
            <person name="Rogers J."/>
            <person name="Stemple D.L."/>
        </authorList>
    </citation>
    <scope>NUCLEOTIDE SEQUENCE [LARGE SCALE GENOMIC DNA]</scope>
    <source>
        <strain>Tuebingen</strain>
    </source>
</reference>
<reference key="2">
    <citation type="submission" date="2005-05" db="EMBL/GenBank/DDBJ databases">
        <authorList>
            <consortium name="NIH - Zebrafish Gene Collection (ZGC) project"/>
        </authorList>
    </citation>
    <scope>NUCLEOTIDE SEQUENCE [LARGE SCALE MRNA]</scope>
    <source>
        <tissue>Olfactory epithelium</tissue>
    </source>
</reference>
<reference key="3">
    <citation type="journal article" date="2019" name="Genes (Basel)">
        <title>Ankrd45 Is a Novel Ankyrin Repeat Protein Required for Cell Proliferation.</title>
        <authorList>
            <person name="Kang Y."/>
            <person name="Xie H."/>
            <person name="Zhao C."/>
        </authorList>
    </citation>
    <scope>FUNCTION</scope>
    <scope>DISRUPTION PHENOTYPE</scope>
    <scope>DEVELOPMENTAL STAGE</scope>
    <scope>TISSUE SPECIFICITY</scope>
</reference>
<accession>B0S794</accession>
<accession>Q501Y8</accession>
<evidence type="ECO:0000250" key="1">
    <source>
        <dbReference type="UniProtKB" id="Q5TZF3"/>
    </source>
</evidence>
<evidence type="ECO:0000255" key="2"/>
<evidence type="ECO:0000269" key="3">
    <source>
    </source>
</evidence>
<evidence type="ECO:0000269" key="4">
    <source ref="2"/>
</evidence>
<evidence type="ECO:0000305" key="5"/>
<evidence type="ECO:0000312" key="6">
    <source>
        <dbReference type="ZFIN" id="ZDB-GENE-050522-311"/>
    </source>
</evidence>
<feature type="chain" id="PRO_0000453973" description="Ankyrin repeat domain-containing protein 45">
    <location>
        <begin position="1"/>
        <end position="224"/>
    </location>
</feature>
<feature type="repeat" description="ANK 1" evidence="2">
    <location>
        <begin position="46"/>
        <end position="76"/>
    </location>
</feature>
<feature type="repeat" description="ANK 2" evidence="2">
    <location>
        <begin position="80"/>
        <end position="109"/>
    </location>
</feature>
<feature type="sequence conflict" description="In Ref. 2; AAH95811." evidence="5" ref="2">
    <original>D</original>
    <variation>E</variation>
    <location>
        <position position="180"/>
    </location>
</feature>
<feature type="sequence conflict" description="In Ref. 2; AAH95811." evidence="5" ref="2">
    <original>D</original>
    <variation>V</variation>
    <location>
        <position position="192"/>
    </location>
</feature>
<comment type="function">
    <text evidence="3">May play a role during cell division.</text>
</comment>
<comment type="subcellular location">
    <subcellularLocation>
        <location evidence="1">Cytoplasm</location>
    </subcellularLocation>
    <subcellularLocation>
        <location evidence="1">Midbody</location>
        <location evidence="1">Midbody ring</location>
    </subcellularLocation>
    <subcellularLocation>
        <location evidence="1">Cleavage furrow</location>
    </subcellularLocation>
    <text evidence="1">Distribution is highly dynamic during mitosis. Not detected during interphase, localized to cytoplasm during metaphase, to cleavage furrow during anaphase and telophase, and to midbody ring during cytokinesis.</text>
</comment>
<comment type="tissue specificity">
    <text evidence="4">Widely expressed.</text>
</comment>
<comment type="developmental stage">
    <text evidence="4">Weakly detected in the dorsal forerunner cells at 80% epiboly to bud stages. At the 10-somite stage, strong expression is detected in the otic placodes, Kupffer's vesicles, and floor plate. Later, at 24 hours post-fertilization, is mainly expressed in organs rich in motile cilia, including otic vesicles, pronephric ducts, and floor plates. At later stages, displays a ubiquitous expression pattern.</text>
</comment>
<comment type="disruption phenotype">
    <text evidence="3">Ankrd45 mutants are viable and show no apparent defects. However mutant larvae developed enlarged livers when induced with liver specific expression of Kras G12V, one of the common mutations of KRAS that leads to cancer in humans.</text>
</comment>
<name>ANR45_DANRE</name>
<proteinExistence type="evidence at transcript level"/>
<keyword id="KW-0040">ANK repeat</keyword>
<keyword id="KW-0963">Cytoplasm</keyword>
<keyword id="KW-1185">Reference proteome</keyword>
<keyword id="KW-0677">Repeat</keyword>
<gene>
    <name evidence="6" type="primary">ankrd45</name>
</gene>
<protein>
    <recommendedName>
        <fullName>Ankyrin repeat domain-containing protein 45</fullName>
    </recommendedName>
</protein>
<sequence length="224" mass="25070">MRSAEEKTVLLCALDDDLEGLKGILERTFTDDAAQSENILWEKDEVGRNALFAACMMGRSAIVRELVQNGAADVNELTARGYSPLHCSAMWGQLDTLKTLVELNADFQAINFRGEKAVDVARRYDKLDCAEYLAWAEAKQNLQAFIQEVRAIVADQEKVQGKLNKEDKNICINTCSAKSDWINNTRTATAQDFIEQKKLLEDVLAPVLLKLNAQPEASMKTRKN</sequence>
<organism>
    <name type="scientific">Danio rerio</name>
    <name type="common">Zebrafish</name>
    <name type="synonym">Brachydanio rerio</name>
    <dbReference type="NCBI Taxonomy" id="7955"/>
    <lineage>
        <taxon>Eukaryota</taxon>
        <taxon>Metazoa</taxon>
        <taxon>Chordata</taxon>
        <taxon>Craniata</taxon>
        <taxon>Vertebrata</taxon>
        <taxon>Euteleostomi</taxon>
        <taxon>Actinopterygii</taxon>
        <taxon>Neopterygii</taxon>
        <taxon>Teleostei</taxon>
        <taxon>Ostariophysi</taxon>
        <taxon>Cypriniformes</taxon>
        <taxon>Danionidae</taxon>
        <taxon>Danioninae</taxon>
        <taxon>Danio</taxon>
    </lineage>
</organism>
<dbReference type="EMBL" id="FP015808">
    <property type="status" value="NOT_ANNOTATED_CDS"/>
    <property type="molecule type" value="Genomic_DNA"/>
</dbReference>
<dbReference type="EMBL" id="FP016213">
    <property type="status" value="NOT_ANNOTATED_CDS"/>
    <property type="molecule type" value="Genomic_DNA"/>
</dbReference>
<dbReference type="EMBL" id="BC095811">
    <property type="protein sequence ID" value="AAH95811.1"/>
    <property type="molecule type" value="mRNA"/>
</dbReference>
<dbReference type="RefSeq" id="NP_001018606.2">
    <property type="nucleotide sequence ID" value="NM_001020770.2"/>
</dbReference>
<dbReference type="SMR" id="B0S794"/>
<dbReference type="FunCoup" id="B0S794">
    <property type="interactions" value="314"/>
</dbReference>
<dbReference type="STRING" id="7955.ENSDARP00000020123"/>
<dbReference type="PaxDb" id="7955-ENSDARP00000020123"/>
<dbReference type="PeptideAtlas" id="B0S794"/>
<dbReference type="Ensembl" id="ENSDART00000002094">
    <property type="protein sequence ID" value="ENSDARP00000020123"/>
    <property type="gene ID" value="ENSDARG00000011326"/>
</dbReference>
<dbReference type="GeneID" id="553808"/>
<dbReference type="KEGG" id="dre:553808"/>
<dbReference type="AGR" id="ZFIN:ZDB-GENE-050522-311"/>
<dbReference type="CTD" id="339416"/>
<dbReference type="ZFIN" id="ZDB-GENE-050522-311">
    <property type="gene designation" value="ankrd45"/>
</dbReference>
<dbReference type="eggNOG" id="KOG0100">
    <property type="taxonomic scope" value="Eukaryota"/>
</dbReference>
<dbReference type="HOGENOM" id="CLU_087014_0_0_1"/>
<dbReference type="InParanoid" id="B0S794"/>
<dbReference type="OMA" id="ATPRKFW"/>
<dbReference type="OrthoDB" id="194358at2759"/>
<dbReference type="PhylomeDB" id="B0S794"/>
<dbReference type="TreeFam" id="TF329503"/>
<dbReference type="PRO" id="PR:B0S794"/>
<dbReference type="Proteomes" id="UP000000437">
    <property type="component" value="Chromosome 2"/>
</dbReference>
<dbReference type="Bgee" id="ENSDARG00000011326">
    <property type="expression patterns" value="Expressed in Kupffer's vesicle and 27 other cell types or tissues"/>
</dbReference>
<dbReference type="ExpressionAtlas" id="B0S794">
    <property type="expression patterns" value="baseline"/>
</dbReference>
<dbReference type="GO" id="GO:0032154">
    <property type="term" value="C:cleavage furrow"/>
    <property type="evidence" value="ECO:0000250"/>
    <property type="project" value="UniProtKB"/>
</dbReference>
<dbReference type="GO" id="GO:0005737">
    <property type="term" value="C:cytoplasm"/>
    <property type="evidence" value="ECO:0000250"/>
    <property type="project" value="UniProtKB"/>
</dbReference>
<dbReference type="GO" id="GO:0090543">
    <property type="term" value="C:Flemming body"/>
    <property type="evidence" value="ECO:0007669"/>
    <property type="project" value="UniProtKB-SubCell"/>
</dbReference>
<dbReference type="GO" id="GO:0030496">
    <property type="term" value="C:midbody"/>
    <property type="evidence" value="ECO:0000250"/>
    <property type="project" value="UniProtKB"/>
</dbReference>
<dbReference type="GO" id="GO:0008283">
    <property type="term" value="P:cell population proliferation"/>
    <property type="evidence" value="ECO:0000315"/>
    <property type="project" value="UniProtKB"/>
</dbReference>
<dbReference type="Gene3D" id="1.20.1270.10">
    <property type="match status" value="1"/>
</dbReference>
<dbReference type="Gene3D" id="1.25.40.20">
    <property type="entry name" value="Ankyrin repeat-containing domain"/>
    <property type="match status" value="1"/>
</dbReference>
<dbReference type="InterPro" id="IPR039323">
    <property type="entry name" value="ANKRD_45/46/60"/>
</dbReference>
<dbReference type="InterPro" id="IPR002110">
    <property type="entry name" value="Ankyrin_rpt"/>
</dbReference>
<dbReference type="InterPro" id="IPR036770">
    <property type="entry name" value="Ankyrin_rpt-contain_sf"/>
</dbReference>
<dbReference type="InterPro" id="IPR029048">
    <property type="entry name" value="HSP70_C_sf"/>
</dbReference>
<dbReference type="PANTHER" id="PTHR22677">
    <property type="entry name" value="ANKYRIN REPEAT DOMAIN-CONTAINING PROTEIN 60"/>
    <property type="match status" value="1"/>
</dbReference>
<dbReference type="PANTHER" id="PTHR22677:SF4">
    <property type="entry name" value="USHER SYNDROME TYPE-1G PROTEIN-LIKE PROTEIN"/>
    <property type="match status" value="1"/>
</dbReference>
<dbReference type="Pfam" id="PF12796">
    <property type="entry name" value="Ank_2"/>
    <property type="match status" value="1"/>
</dbReference>
<dbReference type="SMART" id="SM00248">
    <property type="entry name" value="ANK"/>
    <property type="match status" value="2"/>
</dbReference>
<dbReference type="SUPFAM" id="SSF48403">
    <property type="entry name" value="Ankyrin repeat"/>
    <property type="match status" value="1"/>
</dbReference>
<dbReference type="SUPFAM" id="SSF100934">
    <property type="entry name" value="Heat shock protein 70kD (HSP70), C-terminal subdomain"/>
    <property type="match status" value="1"/>
</dbReference>
<dbReference type="PROSITE" id="PS50297">
    <property type="entry name" value="ANK_REP_REGION"/>
    <property type="match status" value="1"/>
</dbReference>
<dbReference type="PROSITE" id="PS50088">
    <property type="entry name" value="ANK_REPEAT"/>
    <property type="match status" value="1"/>
</dbReference>